<reference key="1">
    <citation type="submission" date="2007-09" db="EMBL/GenBank/DDBJ databases">
        <title>Complete genome sequencing of Rickettsia bellii.</title>
        <authorList>
            <person name="Madan A."/>
            <person name="Lee H."/>
            <person name="Madan A."/>
            <person name="Yoon J.-G."/>
            <person name="Ryu G.-Y."/>
            <person name="Dasch G."/>
            <person name="Ereemeva M."/>
        </authorList>
    </citation>
    <scope>NUCLEOTIDE SEQUENCE [LARGE SCALE GENOMIC DNA]</scope>
    <source>
        <strain>OSU 85-389</strain>
    </source>
</reference>
<comment type="function">
    <text evidence="1">Associates with the EF-Tu.GDP complex and induces the exchange of GDP to GTP. It remains bound to the aminoacyl-tRNA.EF-Tu.GTP complex up to the GTP hydrolysis stage on the ribosome.</text>
</comment>
<comment type="subcellular location">
    <subcellularLocation>
        <location evidence="1">Cytoplasm</location>
    </subcellularLocation>
</comment>
<comment type="similarity">
    <text evidence="1">Belongs to the EF-Ts family.</text>
</comment>
<evidence type="ECO:0000255" key="1">
    <source>
        <dbReference type="HAMAP-Rule" id="MF_00050"/>
    </source>
</evidence>
<keyword id="KW-0963">Cytoplasm</keyword>
<keyword id="KW-0251">Elongation factor</keyword>
<keyword id="KW-0648">Protein biosynthesis</keyword>
<name>EFTS_RICB8</name>
<feature type="chain" id="PRO_1000006166" description="Elongation factor Ts">
    <location>
        <begin position="1"/>
        <end position="309"/>
    </location>
</feature>
<feature type="region of interest" description="Involved in Mg(2+) ion dislocation from EF-Tu" evidence="1">
    <location>
        <begin position="82"/>
        <end position="85"/>
    </location>
</feature>
<gene>
    <name evidence="1" type="primary">tsf</name>
    <name type="ordered locus">A1I_00450</name>
</gene>
<sequence length="309" mass="33618">MSEVNISASDVRELREKTGAGMMDCKKALIETKGNLEEAVDFLRTKGLAAAAKKAGRVAAEGLTAAKVDGLTGVVVEINSETDFVARNEQFQNLVTNIANLAINVKDIEELKAAKMPNGKSVEEDVVENIATIGENLTLRRMEVLKVSEGAIGSYVHNEVASNLGKISVLVGLQSSAKDTAKLEALAKQIAVHVAGNNPQSIDDSGLDQALVERERKVFFEKSKEEGKPDNIIEKMVEGRIRKFFAEVVLLQQNFLFDNKLTVAEVIKNAAKELGAEIQITKFIRYELGEGIEQEEKNFADEVAAVMKG</sequence>
<accession>A8GUK0</accession>
<protein>
    <recommendedName>
        <fullName evidence="1">Elongation factor Ts</fullName>
        <shortName evidence="1">EF-Ts</shortName>
    </recommendedName>
</protein>
<dbReference type="EMBL" id="CP000849">
    <property type="protein sequence ID" value="ABV78496.1"/>
    <property type="molecule type" value="Genomic_DNA"/>
</dbReference>
<dbReference type="RefSeq" id="WP_011477934.1">
    <property type="nucleotide sequence ID" value="NC_009883.1"/>
</dbReference>
<dbReference type="SMR" id="A8GUK0"/>
<dbReference type="KEGG" id="rbo:A1I_00450"/>
<dbReference type="HOGENOM" id="CLU_047155_2_0_5"/>
<dbReference type="GO" id="GO:0005737">
    <property type="term" value="C:cytoplasm"/>
    <property type="evidence" value="ECO:0007669"/>
    <property type="project" value="UniProtKB-SubCell"/>
</dbReference>
<dbReference type="GO" id="GO:0003746">
    <property type="term" value="F:translation elongation factor activity"/>
    <property type="evidence" value="ECO:0007669"/>
    <property type="project" value="UniProtKB-UniRule"/>
</dbReference>
<dbReference type="CDD" id="cd14275">
    <property type="entry name" value="UBA_EF-Ts"/>
    <property type="match status" value="1"/>
</dbReference>
<dbReference type="FunFam" id="1.10.286.20:FF:000001">
    <property type="entry name" value="Elongation factor Ts"/>
    <property type="match status" value="1"/>
</dbReference>
<dbReference type="FunFam" id="1.10.8.10:FF:000001">
    <property type="entry name" value="Elongation factor Ts"/>
    <property type="match status" value="1"/>
</dbReference>
<dbReference type="Gene3D" id="1.10.286.20">
    <property type="match status" value="1"/>
</dbReference>
<dbReference type="Gene3D" id="1.10.8.10">
    <property type="entry name" value="DNA helicase RuvA subunit, C-terminal domain"/>
    <property type="match status" value="1"/>
</dbReference>
<dbReference type="Gene3D" id="3.30.479.20">
    <property type="entry name" value="Elongation factor Ts, dimerisation domain"/>
    <property type="match status" value="2"/>
</dbReference>
<dbReference type="HAMAP" id="MF_00050">
    <property type="entry name" value="EF_Ts"/>
    <property type="match status" value="1"/>
</dbReference>
<dbReference type="InterPro" id="IPR036402">
    <property type="entry name" value="EF-Ts_dimer_sf"/>
</dbReference>
<dbReference type="InterPro" id="IPR001816">
    <property type="entry name" value="Transl_elong_EFTs/EF1B"/>
</dbReference>
<dbReference type="InterPro" id="IPR014039">
    <property type="entry name" value="Transl_elong_EFTs/EF1B_dimer"/>
</dbReference>
<dbReference type="InterPro" id="IPR018101">
    <property type="entry name" value="Transl_elong_Ts_CS"/>
</dbReference>
<dbReference type="InterPro" id="IPR009060">
    <property type="entry name" value="UBA-like_sf"/>
</dbReference>
<dbReference type="NCBIfam" id="TIGR00116">
    <property type="entry name" value="tsf"/>
    <property type="match status" value="1"/>
</dbReference>
<dbReference type="PANTHER" id="PTHR11741">
    <property type="entry name" value="ELONGATION FACTOR TS"/>
    <property type="match status" value="1"/>
</dbReference>
<dbReference type="PANTHER" id="PTHR11741:SF0">
    <property type="entry name" value="ELONGATION FACTOR TS, MITOCHONDRIAL"/>
    <property type="match status" value="1"/>
</dbReference>
<dbReference type="Pfam" id="PF00889">
    <property type="entry name" value="EF_TS"/>
    <property type="match status" value="1"/>
</dbReference>
<dbReference type="SUPFAM" id="SSF54713">
    <property type="entry name" value="Elongation factor Ts (EF-Ts), dimerisation domain"/>
    <property type="match status" value="1"/>
</dbReference>
<dbReference type="SUPFAM" id="SSF46934">
    <property type="entry name" value="UBA-like"/>
    <property type="match status" value="1"/>
</dbReference>
<dbReference type="PROSITE" id="PS01126">
    <property type="entry name" value="EF_TS_1"/>
    <property type="match status" value="1"/>
</dbReference>
<dbReference type="PROSITE" id="PS01127">
    <property type="entry name" value="EF_TS_2"/>
    <property type="match status" value="1"/>
</dbReference>
<organism>
    <name type="scientific">Rickettsia bellii (strain OSU 85-389)</name>
    <dbReference type="NCBI Taxonomy" id="391896"/>
    <lineage>
        <taxon>Bacteria</taxon>
        <taxon>Pseudomonadati</taxon>
        <taxon>Pseudomonadota</taxon>
        <taxon>Alphaproteobacteria</taxon>
        <taxon>Rickettsiales</taxon>
        <taxon>Rickettsiaceae</taxon>
        <taxon>Rickettsieae</taxon>
        <taxon>Rickettsia</taxon>
        <taxon>belli group</taxon>
    </lineage>
</organism>
<proteinExistence type="inferred from homology"/>